<protein>
    <recommendedName>
        <fullName>Probable histone H2A.4</fullName>
    </recommendedName>
</protein>
<proteinExistence type="evidence at transcript level"/>
<keyword id="KW-0158">Chromosome</keyword>
<keyword id="KW-0238">DNA-binding</keyword>
<keyword id="KW-0544">Nucleosome core</keyword>
<keyword id="KW-0539">Nucleus</keyword>
<keyword id="KW-1185">Reference proteome</keyword>
<organism>
    <name type="scientific">Oryza sativa subsp. japonica</name>
    <name type="common">Rice</name>
    <dbReference type="NCBI Taxonomy" id="39947"/>
    <lineage>
        <taxon>Eukaryota</taxon>
        <taxon>Viridiplantae</taxon>
        <taxon>Streptophyta</taxon>
        <taxon>Embryophyta</taxon>
        <taxon>Tracheophyta</taxon>
        <taxon>Spermatophyta</taxon>
        <taxon>Magnoliopsida</taxon>
        <taxon>Liliopsida</taxon>
        <taxon>Poales</taxon>
        <taxon>Poaceae</taxon>
        <taxon>BOP clade</taxon>
        <taxon>Oryzoideae</taxon>
        <taxon>Oryzeae</taxon>
        <taxon>Oryzinae</taxon>
        <taxon>Oryza</taxon>
        <taxon>Oryza sativa</taxon>
    </lineage>
</organism>
<sequence>MEVGAKVPKKAGAGGRRGGGGPKKKPVSRSVKAGLQFPVGRIGRYLKQGRYSQRIGTGAPVYLAAVLEYLAAEVLELAGNAARDNKKNRIIPRHVLLAIRNDEELGKLLAGVTIAHGGVLPNINPVLLPKKTGSAAAKEAKEGKTPKSPKKATTKSPKKAAAA</sequence>
<reference key="1">
    <citation type="journal article" date="2005" name="Mol. Genet. Genomics">
        <title>A fine physical map of the rice chromosome 5.</title>
        <authorList>
            <person name="Cheng C.-H."/>
            <person name="Chung M.C."/>
            <person name="Liu S.-M."/>
            <person name="Chen S.-K."/>
            <person name="Kao F.Y."/>
            <person name="Lin S.-J."/>
            <person name="Hsiao S.-H."/>
            <person name="Tseng I.C."/>
            <person name="Hsing Y.-I.C."/>
            <person name="Wu H.-P."/>
            <person name="Chen C.-S."/>
            <person name="Shaw J.-F."/>
            <person name="Wu J."/>
            <person name="Matsumoto T."/>
            <person name="Sasaki T."/>
            <person name="Chen H.-C."/>
            <person name="Chow T.-Y."/>
        </authorList>
    </citation>
    <scope>NUCLEOTIDE SEQUENCE [LARGE SCALE GENOMIC DNA]</scope>
    <source>
        <strain>cv. Nipponbare</strain>
    </source>
</reference>
<reference key="2">
    <citation type="journal article" date="2005" name="Nature">
        <title>The map-based sequence of the rice genome.</title>
        <authorList>
            <consortium name="International rice genome sequencing project (IRGSP)"/>
        </authorList>
    </citation>
    <scope>NUCLEOTIDE SEQUENCE [LARGE SCALE GENOMIC DNA]</scope>
    <source>
        <strain>cv. Nipponbare</strain>
    </source>
</reference>
<reference key="3">
    <citation type="journal article" date="2008" name="Nucleic Acids Res.">
        <title>The rice annotation project database (RAP-DB): 2008 update.</title>
        <authorList>
            <consortium name="The rice annotation project (RAP)"/>
        </authorList>
    </citation>
    <scope>GENOME REANNOTATION</scope>
    <source>
        <strain>cv. Nipponbare</strain>
    </source>
</reference>
<reference key="4">
    <citation type="journal article" date="2013" name="Rice">
        <title>Improvement of the Oryza sativa Nipponbare reference genome using next generation sequence and optical map data.</title>
        <authorList>
            <person name="Kawahara Y."/>
            <person name="de la Bastide M."/>
            <person name="Hamilton J.P."/>
            <person name="Kanamori H."/>
            <person name="McCombie W.R."/>
            <person name="Ouyang S."/>
            <person name="Schwartz D.C."/>
            <person name="Tanaka T."/>
            <person name="Wu J."/>
            <person name="Zhou S."/>
            <person name="Childs K.L."/>
            <person name="Davidson R.M."/>
            <person name="Lin H."/>
            <person name="Quesada-Ocampo L."/>
            <person name="Vaillancourt B."/>
            <person name="Sakai H."/>
            <person name="Lee S.S."/>
            <person name="Kim J."/>
            <person name="Numa H."/>
            <person name="Itoh T."/>
            <person name="Buell C.R."/>
            <person name="Matsumoto T."/>
        </authorList>
    </citation>
    <scope>GENOME REANNOTATION</scope>
    <source>
        <strain>cv. Nipponbare</strain>
    </source>
</reference>
<reference key="5">
    <citation type="journal article" date="2005" name="PLoS Biol.">
        <title>The genomes of Oryza sativa: a history of duplications.</title>
        <authorList>
            <person name="Yu J."/>
            <person name="Wang J."/>
            <person name="Lin W."/>
            <person name="Li S."/>
            <person name="Li H."/>
            <person name="Zhou J."/>
            <person name="Ni P."/>
            <person name="Dong W."/>
            <person name="Hu S."/>
            <person name="Zeng C."/>
            <person name="Zhang J."/>
            <person name="Zhang Y."/>
            <person name="Li R."/>
            <person name="Xu Z."/>
            <person name="Li S."/>
            <person name="Li X."/>
            <person name="Zheng H."/>
            <person name="Cong L."/>
            <person name="Lin L."/>
            <person name="Yin J."/>
            <person name="Geng J."/>
            <person name="Li G."/>
            <person name="Shi J."/>
            <person name="Liu J."/>
            <person name="Lv H."/>
            <person name="Li J."/>
            <person name="Wang J."/>
            <person name="Deng Y."/>
            <person name="Ran L."/>
            <person name="Shi X."/>
            <person name="Wang X."/>
            <person name="Wu Q."/>
            <person name="Li C."/>
            <person name="Ren X."/>
            <person name="Wang J."/>
            <person name="Wang X."/>
            <person name="Li D."/>
            <person name="Liu D."/>
            <person name="Zhang X."/>
            <person name="Ji Z."/>
            <person name="Zhao W."/>
            <person name="Sun Y."/>
            <person name="Zhang Z."/>
            <person name="Bao J."/>
            <person name="Han Y."/>
            <person name="Dong L."/>
            <person name="Ji J."/>
            <person name="Chen P."/>
            <person name="Wu S."/>
            <person name="Liu J."/>
            <person name="Xiao Y."/>
            <person name="Bu D."/>
            <person name="Tan J."/>
            <person name="Yang L."/>
            <person name="Ye C."/>
            <person name="Zhang J."/>
            <person name="Xu J."/>
            <person name="Zhou Y."/>
            <person name="Yu Y."/>
            <person name="Zhang B."/>
            <person name="Zhuang S."/>
            <person name="Wei H."/>
            <person name="Liu B."/>
            <person name="Lei M."/>
            <person name="Yu H."/>
            <person name="Li Y."/>
            <person name="Xu H."/>
            <person name="Wei S."/>
            <person name="He X."/>
            <person name="Fang L."/>
            <person name="Zhang Z."/>
            <person name="Zhang Y."/>
            <person name="Huang X."/>
            <person name="Su Z."/>
            <person name="Tong W."/>
            <person name="Li J."/>
            <person name="Tong Z."/>
            <person name="Li S."/>
            <person name="Ye J."/>
            <person name="Wang L."/>
            <person name="Fang L."/>
            <person name="Lei T."/>
            <person name="Chen C.-S."/>
            <person name="Chen H.-C."/>
            <person name="Xu Z."/>
            <person name="Li H."/>
            <person name="Huang H."/>
            <person name="Zhang F."/>
            <person name="Xu H."/>
            <person name="Li N."/>
            <person name="Zhao C."/>
            <person name="Li S."/>
            <person name="Dong L."/>
            <person name="Huang Y."/>
            <person name="Li L."/>
            <person name="Xi Y."/>
            <person name="Qi Q."/>
            <person name="Li W."/>
            <person name="Zhang B."/>
            <person name="Hu W."/>
            <person name="Zhang Y."/>
            <person name="Tian X."/>
            <person name="Jiao Y."/>
            <person name="Liang X."/>
            <person name="Jin J."/>
            <person name="Gao L."/>
            <person name="Zheng W."/>
            <person name="Hao B."/>
            <person name="Liu S.-M."/>
            <person name="Wang W."/>
            <person name="Yuan L."/>
            <person name="Cao M."/>
            <person name="McDermott J."/>
            <person name="Samudrala R."/>
            <person name="Wang J."/>
            <person name="Wong G.K.-S."/>
            <person name="Yang H."/>
        </authorList>
    </citation>
    <scope>NUCLEOTIDE SEQUENCE [LARGE SCALE GENOMIC DNA]</scope>
    <source>
        <strain>cv. Nipponbare</strain>
    </source>
</reference>
<reference key="6">
    <citation type="journal article" date="2003" name="Science">
        <title>Collection, mapping, and annotation of over 28,000 cDNA clones from japonica rice.</title>
        <authorList>
            <consortium name="The rice full-length cDNA consortium"/>
        </authorList>
    </citation>
    <scope>NUCLEOTIDE SEQUENCE [LARGE SCALE MRNA]</scope>
    <source>
        <strain>cv. Nipponbare</strain>
    </source>
</reference>
<evidence type="ECO:0000250" key="1"/>
<evidence type="ECO:0000256" key="2">
    <source>
        <dbReference type="SAM" id="MobiDB-lite"/>
    </source>
</evidence>
<evidence type="ECO:0000305" key="3"/>
<evidence type="ECO:0000312" key="4">
    <source>
        <dbReference type="EMBL" id="EEE63993.1"/>
    </source>
</evidence>
<accession>Q6L500</accession>
<accession>B7EDG0</accession>
<accession>Q0DHJ7</accession>
<dbReference type="EMBL" id="AC108876">
    <property type="protein sequence ID" value="AAT39181.1"/>
    <property type="molecule type" value="Genomic_DNA"/>
</dbReference>
<dbReference type="EMBL" id="AC117265">
    <property type="protein sequence ID" value="AAT39174.1"/>
    <property type="molecule type" value="Genomic_DNA"/>
</dbReference>
<dbReference type="EMBL" id="AP008211">
    <property type="protein sequence ID" value="BAF17676.1"/>
    <property type="molecule type" value="Genomic_DNA"/>
</dbReference>
<dbReference type="EMBL" id="AP014961">
    <property type="protein sequence ID" value="BAS94414.1"/>
    <property type="molecule type" value="Genomic_DNA"/>
</dbReference>
<dbReference type="EMBL" id="CM000142">
    <property type="protein sequence ID" value="EAZ34578.1"/>
    <property type="molecule type" value="Genomic_DNA"/>
</dbReference>
<dbReference type="EMBL" id="CM000142">
    <property type="protein sequence ID" value="EEE63993.1"/>
    <property type="molecule type" value="Genomic_DNA"/>
</dbReference>
<dbReference type="EMBL" id="AK067406">
    <property type="protein sequence ID" value="BAG90407.1"/>
    <property type="molecule type" value="mRNA"/>
</dbReference>
<dbReference type="RefSeq" id="XP_015640099.1">
    <property type="nucleotide sequence ID" value="XM_015784613.1"/>
</dbReference>
<dbReference type="SMR" id="Q6L500"/>
<dbReference type="FunCoup" id="Q6L500">
    <property type="interactions" value="7"/>
</dbReference>
<dbReference type="STRING" id="39947.Q6L500"/>
<dbReference type="PaxDb" id="39947-Q6L500"/>
<dbReference type="EnsemblPlants" id="Os05t0461400-02">
    <property type="protein sequence ID" value="Os05t0461400-02"/>
    <property type="gene ID" value="Os05g0461400"/>
</dbReference>
<dbReference type="Gramene" id="Os05t0461400-02">
    <property type="protein sequence ID" value="Os05t0461400-02"/>
    <property type="gene ID" value="Os05g0461400"/>
</dbReference>
<dbReference type="KEGG" id="dosa:Os05g0461400"/>
<dbReference type="eggNOG" id="KOG1756">
    <property type="taxonomic scope" value="Eukaryota"/>
</dbReference>
<dbReference type="HOGENOM" id="CLU_062828_1_1_1"/>
<dbReference type="InParanoid" id="Q6L500"/>
<dbReference type="OMA" id="RRNICHA"/>
<dbReference type="OrthoDB" id="10253031at2759"/>
<dbReference type="Proteomes" id="UP000000763">
    <property type="component" value="Chromosome 5"/>
</dbReference>
<dbReference type="Proteomes" id="UP000007752">
    <property type="component" value="Chromosome 5"/>
</dbReference>
<dbReference type="Proteomes" id="UP000059680">
    <property type="component" value="Chromosome 5"/>
</dbReference>
<dbReference type="GO" id="GO:0000786">
    <property type="term" value="C:nucleosome"/>
    <property type="evidence" value="ECO:0000318"/>
    <property type="project" value="GO_Central"/>
</dbReference>
<dbReference type="GO" id="GO:0005634">
    <property type="term" value="C:nucleus"/>
    <property type="evidence" value="ECO:0000318"/>
    <property type="project" value="GO_Central"/>
</dbReference>
<dbReference type="GO" id="GO:0003677">
    <property type="term" value="F:DNA binding"/>
    <property type="evidence" value="ECO:0007669"/>
    <property type="project" value="UniProtKB-KW"/>
</dbReference>
<dbReference type="GO" id="GO:0046982">
    <property type="term" value="F:protein heterodimerization activity"/>
    <property type="evidence" value="ECO:0007669"/>
    <property type="project" value="InterPro"/>
</dbReference>
<dbReference type="GO" id="GO:0030527">
    <property type="term" value="F:structural constituent of chromatin"/>
    <property type="evidence" value="ECO:0000318"/>
    <property type="project" value="GO_Central"/>
</dbReference>
<dbReference type="GO" id="GO:0031507">
    <property type="term" value="P:heterochromatin formation"/>
    <property type="evidence" value="ECO:0000318"/>
    <property type="project" value="GO_Central"/>
</dbReference>
<dbReference type="CDD" id="cd00074">
    <property type="entry name" value="HFD_H2A"/>
    <property type="match status" value="1"/>
</dbReference>
<dbReference type="FunFam" id="1.10.20.10:FF:000026">
    <property type="entry name" value="Histone H2A"/>
    <property type="match status" value="1"/>
</dbReference>
<dbReference type="Gene3D" id="1.10.20.10">
    <property type="entry name" value="Histone, subunit A"/>
    <property type="match status" value="1"/>
</dbReference>
<dbReference type="InterPro" id="IPR009072">
    <property type="entry name" value="Histone-fold"/>
</dbReference>
<dbReference type="InterPro" id="IPR002119">
    <property type="entry name" value="Histone_H2A"/>
</dbReference>
<dbReference type="InterPro" id="IPR007125">
    <property type="entry name" value="Histone_H2A/H2B/H3"/>
</dbReference>
<dbReference type="InterPro" id="IPR032454">
    <property type="entry name" value="Histone_H2A_C"/>
</dbReference>
<dbReference type="InterPro" id="IPR032458">
    <property type="entry name" value="Histone_H2A_CS"/>
</dbReference>
<dbReference type="PANTHER" id="PTHR23430">
    <property type="entry name" value="HISTONE H2A"/>
    <property type="match status" value="1"/>
</dbReference>
<dbReference type="Pfam" id="PF00125">
    <property type="entry name" value="Histone"/>
    <property type="match status" value="1"/>
</dbReference>
<dbReference type="Pfam" id="PF16211">
    <property type="entry name" value="Histone_H2A_C"/>
    <property type="match status" value="1"/>
</dbReference>
<dbReference type="PRINTS" id="PR00620">
    <property type="entry name" value="HISTONEH2A"/>
</dbReference>
<dbReference type="SMART" id="SM00414">
    <property type="entry name" value="H2A"/>
    <property type="match status" value="1"/>
</dbReference>
<dbReference type="SUPFAM" id="SSF47113">
    <property type="entry name" value="Histone-fold"/>
    <property type="match status" value="1"/>
</dbReference>
<dbReference type="PROSITE" id="PS00046">
    <property type="entry name" value="HISTONE_H2A"/>
    <property type="match status" value="1"/>
</dbReference>
<comment type="function">
    <text>Core component of nucleosome. Nucleosomes wrap and compact DNA into chromatin, limiting DNA accessibility to the cellular machineries which require DNA as a template. Histones thereby play a central role in transcription regulation, DNA repair, DNA replication and chromosomal stability. DNA accessibility is regulated via a complex set of post-translational modifications of histones, also called histone code, and nucleosome remodeling.</text>
</comment>
<comment type="subunit">
    <text>The nucleosome is a histone octamer containing two molecules each of H2A, H2B, H3 and H4 assembled in one H3-H4 heterotetramer and two H2A-H2B heterodimers. The octamer wraps approximately 147 bp of DNA.</text>
</comment>
<comment type="subcellular location">
    <subcellularLocation>
        <location evidence="1">Nucleus</location>
    </subcellularLocation>
    <subcellularLocation>
        <location evidence="1">Chromosome</location>
    </subcellularLocation>
</comment>
<comment type="domain">
    <text>Contains 2 SPKK motifs which may interact with the minor groove of A/T-rich DNA sites. Phosphorylation of this motif may regulate DNA binding. This motif is reiterated in both termini of histone H1 and in the N-terminus of sea urchin histones H2B, but its presence in the C-terminus seems to be unique to plant H2A.</text>
</comment>
<comment type="similarity">
    <text evidence="3">Belongs to the histone H2A family.</text>
</comment>
<feature type="chain" id="PRO_0000239995" description="Probable histone H2A.4">
    <location>
        <begin position="1"/>
        <end position="163"/>
    </location>
</feature>
<feature type="region of interest" description="Disordered" evidence="2">
    <location>
        <begin position="1"/>
        <end position="30"/>
    </location>
</feature>
<feature type="region of interest" description="Disordered" evidence="2">
    <location>
        <begin position="134"/>
        <end position="163"/>
    </location>
</feature>
<feature type="short sequence motif" description="SPKK motif 1">
    <location>
        <begin position="148"/>
        <end position="151"/>
    </location>
</feature>
<feature type="short sequence motif" description="SPKK motif 2">
    <location>
        <begin position="156"/>
        <end position="159"/>
    </location>
</feature>
<feature type="compositionally biased region" description="Gly residues" evidence="2">
    <location>
        <begin position="12"/>
        <end position="21"/>
    </location>
</feature>
<feature type="compositionally biased region" description="Basic residues" evidence="2">
    <location>
        <begin position="147"/>
        <end position="163"/>
    </location>
</feature>
<gene>
    <name type="ordered locus">Os05g0461400</name>
    <name type="ordered locus">LOC_Os05g38640</name>
    <name type="ORF">OJ1281_H05.14</name>
    <name type="ORF">OJ1525_A02.1</name>
    <name type="ORF">OsJ_018061</name>
    <name evidence="4" type="ORF">OsJ_18822</name>
</gene>
<name>H2A4_ORYSJ</name>